<sequence length="51" mass="5514">MHTPIISETVQPKTAGLIVLGKASAETRGLSQGVEPDIGQTYFEESRINQD</sequence>
<comment type="function">
    <text evidence="1">Shows weak antimicrobial activity against its phylogenetic relative Caulobacter crescentus. Does not show activity against other bacteria tested (E.coli, Vibrio sp, Burkhoderia thailandensis, and Salmonella newport).</text>
</comment>
<comment type="biophysicochemical properties">
    <temperatureDependence>
        <text evidence="2">Irreversibly unfolds upon heat treatment (PubMed:23601645). Between 50 and 65 degrees Celsius, the protein shows an intermediate fold (PubMed:23601645). At more than 65 degrees Celsius, the protein is completely unfolded (PubMed:23601645).</text>
    </temperatureDependence>
</comment>
<comment type="domain">
    <text evidence="2 7">Is composed of a ring composed by 9 residues, a loop and a C-terminal tail (PubMed:23601645). The peptide is threaded when the C-terminal tail is inserted throught the isopeptide-bonded ring (Probable).</text>
</comment>
<comment type="PTM">
    <text evidence="3">This lasso peptide is probably hydrolyzed to a linear form by the isopeptidase AtxE1, in vivo.</text>
</comment>
<comment type="mass spectrometry" mass="2563.96" method="MALDI" evidence="1">
    <text>when expressed in E.coli.</text>
</comment>
<accession>E8RMD3</accession>
<evidence type="ECO:0000269" key="1">
    <source>
    </source>
</evidence>
<evidence type="ECO:0000269" key="2">
    <source>
    </source>
</evidence>
<evidence type="ECO:0000269" key="3">
    <source>
    </source>
</evidence>
<evidence type="ECO:0000303" key="4">
    <source>
    </source>
</evidence>
<evidence type="ECO:0000303" key="5">
    <source>
    </source>
</evidence>
<evidence type="ECO:0000303" key="6">
    <source>
    </source>
</evidence>
<evidence type="ECO:0000305" key="7"/>
<evidence type="ECO:0000305" key="8">
    <source>
    </source>
</evidence>
<evidence type="ECO:0000305" key="9">
    <source>
    </source>
</evidence>
<evidence type="ECO:0000312" key="10">
    <source>
        <dbReference type="EMBL" id="ADU13884.1"/>
    </source>
</evidence>
<evidence type="ECO:0000312" key="11">
    <source>
        <dbReference type="Proteomes" id="UP000001492"/>
    </source>
</evidence>
<evidence type="ECO:0007744" key="12">
    <source>
        <dbReference type="PDB" id="2LTI"/>
    </source>
</evidence>
<evidence type="ECO:0007744" key="13">
    <source>
        <dbReference type="PDB" id="2M37"/>
    </source>
</evidence>
<evidence type="ECO:0007744" key="14">
    <source>
        <dbReference type="PDB" id="2N68"/>
    </source>
</evidence>
<evidence type="ECO:0007829" key="15">
    <source>
        <dbReference type="PDB" id="2LTI"/>
    </source>
</evidence>
<evidence type="ECO:0007829" key="16">
    <source>
        <dbReference type="PDB" id="2M37"/>
    </source>
</evidence>
<dbReference type="EMBL" id="CP002395">
    <property type="protein sequence ID" value="ADU13884.1"/>
    <property type="molecule type" value="Genomic_DNA"/>
</dbReference>
<dbReference type="RefSeq" id="WP_013479712.1">
    <property type="nucleotide sequence ID" value="NC_014816.1"/>
</dbReference>
<dbReference type="PDB" id="2LTI">
    <property type="method" value="NMR"/>
    <property type="chains" value="A=29-51"/>
</dbReference>
<dbReference type="PDB" id="2M37">
    <property type="method" value="NMR"/>
    <property type="chains" value="A=29-47"/>
</dbReference>
<dbReference type="PDB" id="2N68">
    <property type="method" value="NMR"/>
    <property type="chains" value="A=29-51"/>
</dbReference>
<dbReference type="PDBsum" id="2LTI"/>
<dbReference type="PDBsum" id="2M37"/>
<dbReference type="PDBsum" id="2N68"/>
<dbReference type="BMRB" id="E8RMD3"/>
<dbReference type="SMR" id="E8RMD3"/>
<dbReference type="STRING" id="573065.Astex_2228"/>
<dbReference type="KEGG" id="aex:Astex_2228"/>
<dbReference type="HOGENOM" id="CLU_3095092_0_0_5"/>
<dbReference type="EvolutionaryTrace" id="E8RMD3"/>
<dbReference type="Proteomes" id="UP000001492">
    <property type="component" value="Chromosome 1"/>
</dbReference>
<dbReference type="GO" id="GO:0042742">
    <property type="term" value="P:defense response to bacterium"/>
    <property type="evidence" value="ECO:0007669"/>
    <property type="project" value="UniProtKB-KW"/>
</dbReference>
<reference evidence="11" key="1">
    <citation type="submission" date="2010-12" db="EMBL/GenBank/DDBJ databases">
        <title>Complete sequence of chromosome 1 of Asticcacaulis excentricus CB 48.</title>
        <authorList>
            <consortium name="US DOE Joint Genome Institute"/>
            <person name="Lucas S."/>
            <person name="Copeland A."/>
            <person name="Lapidus A."/>
            <person name="Cheng J.-F."/>
            <person name="Bruce D."/>
            <person name="Goodwin L."/>
            <person name="Pitluck S."/>
            <person name="Teshima H."/>
            <person name="Davenport K."/>
            <person name="Detter J.C."/>
            <person name="Han C."/>
            <person name="Tapia R."/>
            <person name="Land M."/>
            <person name="Hauser L."/>
            <person name="Jeffries C."/>
            <person name="Kyrpides N."/>
            <person name="Ivanova N."/>
            <person name="Ovchinnikova G."/>
            <person name="Brun Y.V."/>
            <person name="Woyke T."/>
        </authorList>
    </citation>
    <scope>NUCLEOTIDE SEQUENCE [LARGE SCALE GENOMIC DNA]</scope>
    <source>
        <strain>ATCC 15261 / DSM 4724 / KCTC 12464 / NCIMB 9791 / VKM B-1370 / CB 48</strain>
    </source>
</reference>
<reference key="2">
    <citation type="journal article" date="2013" name="J. Am. Chem. Soc.">
        <title>Discovery and characterization of an isopeptidase that linearizes lasso peptides.</title>
        <authorList>
            <person name="Maksimov M.O."/>
            <person name="Link A.J."/>
        </authorList>
    </citation>
    <scope>EXPRESSION IN E.COLI</scope>
</reference>
<reference evidence="7 12" key="3">
    <citation type="journal article" date="2012" name="Proc. Natl. Acad. Sci. U.S.A.">
        <title>Precursor-centric genome-mining approach for lasso peptide discovery.</title>
        <authorList>
            <person name="Maksimov M.O."/>
            <person name="Pelczer I."/>
            <person name="Link A.J."/>
        </authorList>
    </citation>
    <scope>STRUCTURE BY NMR OF 29-51</scope>
    <scope>FUNCTION</scope>
    <scope>CROSS-LINK</scope>
    <scope>EXPRESSION IN E.COLI</scope>
    <scope>MASS SPECTROMETRY</scope>
    <source>
        <strain>ATCC 15261 / DSM 4724 / KCTC 12464 / NCIMB 9791 / VKM B-1370 / CB 48</strain>
    </source>
</reference>
<reference evidence="7 13" key="4">
    <citation type="journal article" date="2013" name="Chem. Biol.">
        <title>The astexin-1 lasso peptides: biosynthesis, stability, and structural studies.</title>
        <authorList>
            <person name="Zimmermann M."/>
            <person name="Hegemann J.D."/>
            <person name="Xie X."/>
            <person name="Marahiel M.A."/>
        </authorList>
    </citation>
    <scope>STRUCTURE BY NMR OF 29-47</scope>
    <scope>FUNCTION</scope>
    <scope>BIOPHYSICOCHEMICAL PROPERTIES</scope>
    <scope>CROSS-LINK</scope>
    <scope>EXPRESSION IN E.COLI</scope>
    <scope>MUTAGENESIS OF TYR-42; PHE-43 AND ARG-47</scope>
</reference>
<reference evidence="14" key="5">
    <citation type="journal article" date="2016" name="ACS Chem. Biol.">
        <title>Construction of lasso peptide fusion proteins.</title>
        <authorList>
            <person name="Zong C."/>
            <person name="Maksimov M.O."/>
            <person name="Link A.J."/>
        </authorList>
    </citation>
    <scope>STRUCTURE BY NMR OF 29-51</scope>
</reference>
<feature type="propeptide" id="PRO_0000450588" evidence="7">
    <location>
        <begin position="1"/>
        <end position="28"/>
    </location>
</feature>
<feature type="peptide" id="PRO_0000450589" description="Astexin-1" evidence="8 9">
    <location>
        <begin position="29"/>
        <end position="51"/>
    </location>
</feature>
<feature type="site" description="Important for stabilization of the lasso structure" evidence="9">
    <location>
        <position position="42"/>
    </location>
</feature>
<feature type="site" description="Important for stabilization of the lasso structure" evidence="9">
    <location>
        <position position="43"/>
    </location>
</feature>
<feature type="cross-link" description="Isoaspartyl glycine isopeptide (Gly-Asp)" evidence="1 2">
    <location>
        <begin position="29"/>
        <end position="37"/>
    </location>
</feature>
<feature type="mutagenesis site" description="Almost complete loss of Astexin-1 production. Is unfolded." evidence="2">
    <original>Y</original>
    <variation>A</variation>
    <location>
        <position position="42"/>
    </location>
</feature>
<feature type="mutagenesis site" description="No change in thermostability." evidence="2">
    <original>Y</original>
    <variation>W</variation>
    <location>
        <position position="42"/>
    </location>
</feature>
<feature type="mutagenesis site" description="Loss of Astexin-1 production. No change in thermostability." evidence="2">
    <original>F</original>
    <variation>A</variation>
    <location>
        <position position="43"/>
    </location>
</feature>
<feature type="mutagenesis site" description="Gain in thermostability." evidence="2">
    <original>F</original>
    <variation>W</variation>
    <location>
        <position position="43"/>
    </location>
</feature>
<feature type="mutagenesis site" description="No change in thermostability." evidence="2">
    <original>R</original>
    <variation>W</variation>
    <location>
        <position position="47"/>
    </location>
</feature>
<feature type="strand" evidence="15">
    <location>
        <begin position="31"/>
        <end position="35"/>
    </location>
</feature>
<feature type="strand" evidence="16">
    <location>
        <begin position="38"/>
        <end position="40"/>
    </location>
</feature>
<feature type="strand" evidence="15">
    <location>
        <begin position="42"/>
        <end position="46"/>
    </location>
</feature>
<keyword id="KW-0002">3D-structure</keyword>
<keyword id="KW-0044">Antibiotic</keyword>
<keyword id="KW-0929">Antimicrobial</keyword>
<keyword id="KW-1017">Isopeptide bond</keyword>
<keyword id="KW-1185">Reference proteome</keyword>
<gene>
    <name evidence="4 6" type="primary">AtxA1</name>
    <name evidence="10" type="ordered locus">Astex_2228</name>
</gene>
<organism>
    <name type="scientific">Asticcacaulis excentricus (strain ATCC 15261 / DSM 4724 / KCTC 12464 / NCIMB 9791 / VKM B-1370 / CB 48)</name>
    <dbReference type="NCBI Taxonomy" id="573065"/>
    <lineage>
        <taxon>Bacteria</taxon>
        <taxon>Pseudomonadati</taxon>
        <taxon>Pseudomonadota</taxon>
        <taxon>Alphaproteobacteria</taxon>
        <taxon>Caulobacterales</taxon>
        <taxon>Caulobacteraceae</taxon>
        <taxon>Asticcacaulis</taxon>
    </lineage>
</organism>
<protein>
    <recommendedName>
        <fullName evidence="4 5 6">Astexin-1</fullName>
    </recommendedName>
    <alternativeName>
        <fullName evidence="4 5 6">Class II lasso peptide</fullName>
    </alternativeName>
    <alternativeName>
        <fullName evidence="4 6">Ribosomally synthesized and post-translationally modified peptide</fullName>
        <shortName evidence="6">RiPP</shortName>
    </alternativeName>
</protein>
<name>ASTX1_ASTEC</name>
<proteinExistence type="evidence at protein level"/>